<organism>
    <name type="scientific">Bartonella bacilliformis (strain ATCC 35685 / KC583 / Herrer 020/F12,63)</name>
    <dbReference type="NCBI Taxonomy" id="360095"/>
    <lineage>
        <taxon>Bacteria</taxon>
        <taxon>Pseudomonadati</taxon>
        <taxon>Pseudomonadota</taxon>
        <taxon>Alphaproteobacteria</taxon>
        <taxon>Hyphomicrobiales</taxon>
        <taxon>Bartonellaceae</taxon>
        <taxon>Bartonella</taxon>
    </lineage>
</organism>
<dbReference type="EC" id="4.2.1.59" evidence="1"/>
<dbReference type="EMBL" id="CP000524">
    <property type="protein sequence ID" value="ABM45350.1"/>
    <property type="molecule type" value="Genomic_DNA"/>
</dbReference>
<dbReference type="RefSeq" id="WP_005766761.1">
    <property type="nucleotide sequence ID" value="NC_008783.1"/>
</dbReference>
<dbReference type="SMR" id="A1USE6"/>
<dbReference type="STRING" id="360095.BARBAKC583_0591"/>
<dbReference type="GeneID" id="4684695"/>
<dbReference type="KEGG" id="bbk:BARBAKC583_0591"/>
<dbReference type="PATRIC" id="fig|360095.6.peg.577"/>
<dbReference type="eggNOG" id="COG0764">
    <property type="taxonomic scope" value="Bacteria"/>
</dbReference>
<dbReference type="HOGENOM" id="CLU_078912_1_2_5"/>
<dbReference type="OrthoDB" id="9772788at2"/>
<dbReference type="Proteomes" id="UP000000643">
    <property type="component" value="Chromosome"/>
</dbReference>
<dbReference type="GO" id="GO:0005737">
    <property type="term" value="C:cytoplasm"/>
    <property type="evidence" value="ECO:0007669"/>
    <property type="project" value="UniProtKB-SubCell"/>
</dbReference>
<dbReference type="GO" id="GO:0016020">
    <property type="term" value="C:membrane"/>
    <property type="evidence" value="ECO:0007669"/>
    <property type="project" value="GOC"/>
</dbReference>
<dbReference type="GO" id="GO:0019171">
    <property type="term" value="F:(3R)-hydroxyacyl-[acyl-carrier-protein] dehydratase activity"/>
    <property type="evidence" value="ECO:0007669"/>
    <property type="project" value="UniProtKB-EC"/>
</dbReference>
<dbReference type="GO" id="GO:0006633">
    <property type="term" value="P:fatty acid biosynthetic process"/>
    <property type="evidence" value="ECO:0007669"/>
    <property type="project" value="UniProtKB-UniRule"/>
</dbReference>
<dbReference type="GO" id="GO:0009245">
    <property type="term" value="P:lipid A biosynthetic process"/>
    <property type="evidence" value="ECO:0007669"/>
    <property type="project" value="UniProtKB-UniRule"/>
</dbReference>
<dbReference type="CDD" id="cd01288">
    <property type="entry name" value="FabZ"/>
    <property type="match status" value="1"/>
</dbReference>
<dbReference type="FunFam" id="3.10.129.10:FF:000001">
    <property type="entry name" value="3-hydroxyacyl-[acyl-carrier-protein] dehydratase FabZ"/>
    <property type="match status" value="1"/>
</dbReference>
<dbReference type="Gene3D" id="3.10.129.10">
    <property type="entry name" value="Hotdog Thioesterase"/>
    <property type="match status" value="1"/>
</dbReference>
<dbReference type="HAMAP" id="MF_00406">
    <property type="entry name" value="FabZ"/>
    <property type="match status" value="1"/>
</dbReference>
<dbReference type="InterPro" id="IPR013114">
    <property type="entry name" value="FabA_FabZ"/>
</dbReference>
<dbReference type="InterPro" id="IPR010084">
    <property type="entry name" value="FabZ"/>
</dbReference>
<dbReference type="InterPro" id="IPR029069">
    <property type="entry name" value="HotDog_dom_sf"/>
</dbReference>
<dbReference type="NCBIfam" id="TIGR01750">
    <property type="entry name" value="fabZ"/>
    <property type="match status" value="1"/>
</dbReference>
<dbReference type="NCBIfam" id="NF000582">
    <property type="entry name" value="PRK00006.1"/>
    <property type="match status" value="1"/>
</dbReference>
<dbReference type="PANTHER" id="PTHR30272">
    <property type="entry name" value="3-HYDROXYACYL-[ACYL-CARRIER-PROTEIN] DEHYDRATASE"/>
    <property type="match status" value="1"/>
</dbReference>
<dbReference type="PANTHER" id="PTHR30272:SF1">
    <property type="entry name" value="3-HYDROXYACYL-[ACYL-CARRIER-PROTEIN] DEHYDRATASE"/>
    <property type="match status" value="1"/>
</dbReference>
<dbReference type="Pfam" id="PF07977">
    <property type="entry name" value="FabA"/>
    <property type="match status" value="1"/>
</dbReference>
<dbReference type="SUPFAM" id="SSF54637">
    <property type="entry name" value="Thioesterase/thiol ester dehydrase-isomerase"/>
    <property type="match status" value="1"/>
</dbReference>
<name>FABZ_BARBK</name>
<evidence type="ECO:0000255" key="1">
    <source>
        <dbReference type="HAMAP-Rule" id="MF_00406"/>
    </source>
</evidence>
<gene>
    <name evidence="1" type="primary">fabZ</name>
    <name type="ordered locus">BARBAKC583_0591</name>
</gene>
<protein>
    <recommendedName>
        <fullName evidence="1">3-hydroxyacyl-[acyl-carrier-protein] dehydratase FabZ</fullName>
        <ecNumber evidence="1">4.2.1.59</ecNumber>
    </recommendedName>
    <alternativeName>
        <fullName evidence="1">(3R)-hydroxymyristoyl-[acyl-carrier-protein] dehydratase</fullName>
        <shortName evidence="1">(3R)-hydroxymyristoyl-ACP dehydrase</shortName>
    </alternativeName>
    <alternativeName>
        <fullName evidence="1">Beta-hydroxyacyl-ACP dehydratase</fullName>
    </alternativeName>
</protein>
<proteinExistence type="inferred from homology"/>
<accession>A1USE6</accession>
<keyword id="KW-0963">Cytoplasm</keyword>
<keyword id="KW-0441">Lipid A biosynthesis</keyword>
<keyword id="KW-0444">Lipid biosynthesis</keyword>
<keyword id="KW-0443">Lipid metabolism</keyword>
<keyword id="KW-0456">Lyase</keyword>
<sequence length="154" mass="17137">MVNTGEIKNLEAIDIVKLLSVLPHRYPFLLIDRIIEIDGDRKAIGIKNVTVNEPHFVGHFPENPVMPGVLILEAMAQTAGAISLLALGRGKEDLVYLMTIDNAKFRKPVVPGDQMRIHVQLLKKRSEVRRFLCIAEVEGTRVSEAEISAMVVKS</sequence>
<reference key="1">
    <citation type="submission" date="2006-12" db="EMBL/GenBank/DDBJ databases">
        <authorList>
            <person name="Hendrix L."/>
            <person name="Mohamoud Y."/>
            <person name="Radune D."/>
            <person name="Shvartsbeyn A."/>
            <person name="Daugherty S."/>
            <person name="Dodson R."/>
            <person name="Durkin A.S."/>
            <person name="Harkins D."/>
            <person name="Huot H."/>
            <person name="Kothari S.P."/>
            <person name="Madupu R."/>
            <person name="Li J."/>
            <person name="Nelson W.C."/>
            <person name="Shrivastava S."/>
            <person name="Giglio M.G."/>
            <person name="Haft D."/>
            <person name="Selengut J."/>
            <person name="Fraser-Ligget C."/>
            <person name="Seshadri R."/>
        </authorList>
    </citation>
    <scope>NUCLEOTIDE SEQUENCE [LARGE SCALE GENOMIC DNA]</scope>
    <source>
        <strain>ATCC 35685 / KC583 / Herrer 020/F12,63</strain>
    </source>
</reference>
<comment type="function">
    <text evidence="1">Involved in unsaturated fatty acids biosynthesis. Catalyzes the dehydration of short chain beta-hydroxyacyl-ACPs and long chain saturated and unsaturated beta-hydroxyacyl-ACPs.</text>
</comment>
<comment type="catalytic activity">
    <reaction evidence="1">
        <text>a (3R)-hydroxyacyl-[ACP] = a (2E)-enoyl-[ACP] + H2O</text>
        <dbReference type="Rhea" id="RHEA:13097"/>
        <dbReference type="Rhea" id="RHEA-COMP:9925"/>
        <dbReference type="Rhea" id="RHEA-COMP:9945"/>
        <dbReference type="ChEBI" id="CHEBI:15377"/>
        <dbReference type="ChEBI" id="CHEBI:78784"/>
        <dbReference type="ChEBI" id="CHEBI:78827"/>
        <dbReference type="EC" id="4.2.1.59"/>
    </reaction>
</comment>
<comment type="subcellular location">
    <subcellularLocation>
        <location evidence="1">Cytoplasm</location>
    </subcellularLocation>
</comment>
<comment type="similarity">
    <text evidence="1">Belongs to the thioester dehydratase family. FabZ subfamily.</text>
</comment>
<feature type="chain" id="PRO_0000301880" description="3-hydroxyacyl-[acyl-carrier-protein] dehydratase FabZ">
    <location>
        <begin position="1"/>
        <end position="154"/>
    </location>
</feature>
<feature type="active site" evidence="1">
    <location>
        <position position="59"/>
    </location>
</feature>